<comment type="similarity">
    <text evidence="2">Belongs to the LOB domain-containing protein family.</text>
</comment>
<accession>O49651</accession>
<accession>B7XG80</accession>
<accession>Q4PSI2</accession>
<gene>
    <name type="primary">LBD32</name>
    <name type="synonym">ASL26</name>
    <name type="ordered locus">At4g22700</name>
    <name type="ORF">T12H17.90</name>
</gene>
<evidence type="ECO:0000255" key="1">
    <source>
        <dbReference type="PROSITE-ProRule" id="PRU00291"/>
    </source>
</evidence>
<evidence type="ECO:0000305" key="2"/>
<reference key="1">
    <citation type="journal article" date="2009" name="Plant J.">
        <title>Characterization of genes in the ASYMMETRIC LEAVES2/LATERAL ORGAN BOUNDARIES (AS2/LOB) family in Arabidopsis thaliana, and functional and molecular comparisons between AS2 and other family members.</title>
        <authorList>
            <person name="Matsumura Y."/>
            <person name="Iwakawa H."/>
            <person name="Machida Y."/>
            <person name="Machida C."/>
        </authorList>
    </citation>
    <scope>NUCLEOTIDE SEQUENCE [MRNA]</scope>
    <source>
        <strain>cv. Columbia</strain>
    </source>
</reference>
<reference key="2">
    <citation type="journal article" date="1999" name="Nature">
        <title>Sequence and analysis of chromosome 4 of the plant Arabidopsis thaliana.</title>
        <authorList>
            <person name="Mayer K.F.X."/>
            <person name="Schueller C."/>
            <person name="Wambutt R."/>
            <person name="Murphy G."/>
            <person name="Volckaert G."/>
            <person name="Pohl T."/>
            <person name="Duesterhoeft A."/>
            <person name="Stiekema W."/>
            <person name="Entian K.-D."/>
            <person name="Terryn N."/>
            <person name="Harris B."/>
            <person name="Ansorge W."/>
            <person name="Brandt P."/>
            <person name="Grivell L.A."/>
            <person name="Rieger M."/>
            <person name="Weichselgartner M."/>
            <person name="de Simone V."/>
            <person name="Obermaier B."/>
            <person name="Mache R."/>
            <person name="Mueller M."/>
            <person name="Kreis M."/>
            <person name="Delseny M."/>
            <person name="Puigdomenech P."/>
            <person name="Watson M."/>
            <person name="Schmidtheini T."/>
            <person name="Reichert B."/>
            <person name="Portetelle D."/>
            <person name="Perez-Alonso M."/>
            <person name="Boutry M."/>
            <person name="Bancroft I."/>
            <person name="Vos P."/>
            <person name="Hoheisel J."/>
            <person name="Zimmermann W."/>
            <person name="Wedler H."/>
            <person name="Ridley P."/>
            <person name="Langham S.-A."/>
            <person name="McCullagh B."/>
            <person name="Bilham L."/>
            <person name="Robben J."/>
            <person name="van der Schueren J."/>
            <person name="Grymonprez B."/>
            <person name="Chuang Y.-J."/>
            <person name="Vandenbussche F."/>
            <person name="Braeken M."/>
            <person name="Weltjens I."/>
            <person name="Voet M."/>
            <person name="Bastiaens I."/>
            <person name="Aert R."/>
            <person name="Defoor E."/>
            <person name="Weitzenegger T."/>
            <person name="Bothe G."/>
            <person name="Ramsperger U."/>
            <person name="Hilbert H."/>
            <person name="Braun M."/>
            <person name="Holzer E."/>
            <person name="Brandt A."/>
            <person name="Peters S."/>
            <person name="van Staveren M."/>
            <person name="Dirkse W."/>
            <person name="Mooijman P."/>
            <person name="Klein Lankhorst R."/>
            <person name="Rose M."/>
            <person name="Hauf J."/>
            <person name="Koetter P."/>
            <person name="Berneiser S."/>
            <person name="Hempel S."/>
            <person name="Feldpausch M."/>
            <person name="Lamberth S."/>
            <person name="Van den Daele H."/>
            <person name="De Keyser A."/>
            <person name="Buysshaert C."/>
            <person name="Gielen J."/>
            <person name="Villarroel R."/>
            <person name="De Clercq R."/>
            <person name="van Montagu M."/>
            <person name="Rogers J."/>
            <person name="Cronin A."/>
            <person name="Quail M.A."/>
            <person name="Bray-Allen S."/>
            <person name="Clark L."/>
            <person name="Doggett J."/>
            <person name="Hall S."/>
            <person name="Kay M."/>
            <person name="Lennard N."/>
            <person name="McLay K."/>
            <person name="Mayes R."/>
            <person name="Pettett A."/>
            <person name="Rajandream M.A."/>
            <person name="Lyne M."/>
            <person name="Benes V."/>
            <person name="Rechmann S."/>
            <person name="Borkova D."/>
            <person name="Bloecker H."/>
            <person name="Scharfe M."/>
            <person name="Grimm M."/>
            <person name="Loehnert T.-H."/>
            <person name="Dose S."/>
            <person name="de Haan M."/>
            <person name="Maarse A.C."/>
            <person name="Schaefer M."/>
            <person name="Mueller-Auer S."/>
            <person name="Gabel C."/>
            <person name="Fuchs M."/>
            <person name="Fartmann B."/>
            <person name="Granderath K."/>
            <person name="Dauner D."/>
            <person name="Herzl A."/>
            <person name="Neumann S."/>
            <person name="Argiriou A."/>
            <person name="Vitale D."/>
            <person name="Liguori R."/>
            <person name="Piravandi E."/>
            <person name="Massenet O."/>
            <person name="Quigley F."/>
            <person name="Clabauld G."/>
            <person name="Muendlein A."/>
            <person name="Felber R."/>
            <person name="Schnabl S."/>
            <person name="Hiller R."/>
            <person name="Schmidt W."/>
            <person name="Lecharny A."/>
            <person name="Aubourg S."/>
            <person name="Chefdor F."/>
            <person name="Cooke R."/>
            <person name="Berger C."/>
            <person name="Monfort A."/>
            <person name="Casacuberta E."/>
            <person name="Gibbons T."/>
            <person name="Weber N."/>
            <person name="Vandenbol M."/>
            <person name="Bargues M."/>
            <person name="Terol J."/>
            <person name="Torres A."/>
            <person name="Perez-Perez A."/>
            <person name="Purnelle B."/>
            <person name="Bent E."/>
            <person name="Johnson S."/>
            <person name="Tacon D."/>
            <person name="Jesse T."/>
            <person name="Heijnen L."/>
            <person name="Schwarz S."/>
            <person name="Scholler P."/>
            <person name="Heber S."/>
            <person name="Francs P."/>
            <person name="Bielke C."/>
            <person name="Frishman D."/>
            <person name="Haase D."/>
            <person name="Lemcke K."/>
            <person name="Mewes H.-W."/>
            <person name="Stocker S."/>
            <person name="Zaccaria P."/>
            <person name="Bevan M."/>
            <person name="Wilson R.K."/>
            <person name="de la Bastide M."/>
            <person name="Habermann K."/>
            <person name="Parnell L."/>
            <person name="Dedhia N."/>
            <person name="Gnoj L."/>
            <person name="Schutz K."/>
            <person name="Huang E."/>
            <person name="Spiegel L."/>
            <person name="Sekhon M."/>
            <person name="Murray J."/>
            <person name="Sheet P."/>
            <person name="Cordes M."/>
            <person name="Abu-Threideh J."/>
            <person name="Stoneking T."/>
            <person name="Kalicki J."/>
            <person name="Graves T."/>
            <person name="Harmon G."/>
            <person name="Edwards J."/>
            <person name="Latreille P."/>
            <person name="Courtney L."/>
            <person name="Cloud J."/>
            <person name="Abbott A."/>
            <person name="Scott K."/>
            <person name="Johnson D."/>
            <person name="Minx P."/>
            <person name="Bentley D."/>
            <person name="Fulton B."/>
            <person name="Miller N."/>
            <person name="Greco T."/>
            <person name="Kemp K."/>
            <person name="Kramer J."/>
            <person name="Fulton L."/>
            <person name="Mardis E."/>
            <person name="Dante M."/>
            <person name="Pepin K."/>
            <person name="Hillier L.W."/>
            <person name="Nelson J."/>
            <person name="Spieth J."/>
            <person name="Ryan E."/>
            <person name="Andrews S."/>
            <person name="Geisel C."/>
            <person name="Layman D."/>
            <person name="Du H."/>
            <person name="Ali J."/>
            <person name="Berghoff A."/>
            <person name="Jones K."/>
            <person name="Drone K."/>
            <person name="Cotton M."/>
            <person name="Joshu C."/>
            <person name="Antonoiu B."/>
            <person name="Zidanic M."/>
            <person name="Strong C."/>
            <person name="Sun H."/>
            <person name="Lamar B."/>
            <person name="Yordan C."/>
            <person name="Ma P."/>
            <person name="Zhong J."/>
            <person name="Preston R."/>
            <person name="Vil D."/>
            <person name="Shekher M."/>
            <person name="Matero A."/>
            <person name="Shah R."/>
            <person name="Swaby I.K."/>
            <person name="O'Shaughnessy A."/>
            <person name="Rodriguez M."/>
            <person name="Hoffman J."/>
            <person name="Till S."/>
            <person name="Granat S."/>
            <person name="Shohdy N."/>
            <person name="Hasegawa A."/>
            <person name="Hameed A."/>
            <person name="Lodhi M."/>
            <person name="Johnson A."/>
            <person name="Chen E."/>
            <person name="Marra M.A."/>
            <person name="Martienssen R."/>
            <person name="McCombie W.R."/>
        </authorList>
    </citation>
    <scope>NUCLEOTIDE SEQUENCE [LARGE SCALE GENOMIC DNA]</scope>
    <source>
        <strain>cv. Columbia</strain>
    </source>
</reference>
<reference key="3">
    <citation type="journal article" date="2017" name="Plant J.">
        <title>Araport11: a complete reannotation of the Arabidopsis thaliana reference genome.</title>
        <authorList>
            <person name="Cheng C.Y."/>
            <person name="Krishnakumar V."/>
            <person name="Chan A.P."/>
            <person name="Thibaud-Nissen F."/>
            <person name="Schobel S."/>
            <person name="Town C.D."/>
        </authorList>
    </citation>
    <scope>GENOME REANNOTATION</scope>
    <source>
        <strain>cv. Columbia</strain>
    </source>
</reference>
<reference key="4">
    <citation type="submission" date="2005-05" db="EMBL/GenBank/DDBJ databases">
        <authorList>
            <person name="Underwood B.A."/>
            <person name="Xiao Y.-L."/>
            <person name="Moskal W.A. Jr."/>
            <person name="Monaghan E.L."/>
            <person name="Wang W."/>
            <person name="Redman J.C."/>
            <person name="Wu H.C."/>
            <person name="Utterback T."/>
            <person name="Town C.D."/>
        </authorList>
    </citation>
    <scope>NUCLEOTIDE SEQUENCE [LARGE SCALE MRNA]</scope>
    <source>
        <strain>cv. Columbia</strain>
    </source>
</reference>
<reference key="5">
    <citation type="journal article" date="2002" name="Plant Physiol.">
        <title>The LATERAL ORGAN BOUNDARIES gene defines a novel, plant-specific gene family.</title>
        <authorList>
            <person name="Shuai B."/>
            <person name="Reynaga-Pena C.G."/>
            <person name="Springer P.S."/>
        </authorList>
    </citation>
    <scope>GENE FAMILY</scope>
    <scope>NOMENCLATURE</scope>
</reference>
<reference key="6">
    <citation type="journal article" date="2002" name="Plant Cell Physiol.">
        <title>The ASYMMETRIC LEAVES2 gene of Arabidopsis thaliana, required for formation of a symmetric flat leaf lamina, encodes a member of a novel family of proteins characterized by cysteine repeats and a leucine zipper.</title>
        <authorList>
            <person name="Iwakawa H."/>
            <person name="Ueno Y."/>
            <person name="Semiarti E."/>
            <person name="Onouchi H."/>
            <person name="Kojima S."/>
            <person name="Tsukaya H."/>
            <person name="Hasebe M."/>
            <person name="Soma T."/>
            <person name="Ikezaki M."/>
            <person name="Machida C."/>
            <person name="Machida Y."/>
        </authorList>
    </citation>
    <scope>GENE FAMILY</scope>
    <scope>NOMENCLATURE</scope>
</reference>
<feature type="chain" id="PRO_0000132283" description="LOB domain-containing protein 32">
    <location>
        <begin position="1"/>
        <end position="192"/>
    </location>
</feature>
<feature type="domain" description="LOB" evidence="1">
    <location>
        <begin position="4"/>
        <end position="105"/>
    </location>
</feature>
<protein>
    <recommendedName>
        <fullName>LOB domain-containing protein 32</fullName>
    </recommendedName>
    <alternativeName>
        <fullName>ASYMMETRIC LEAVES 2-like protein 26</fullName>
        <shortName>AS2-like protein 26</shortName>
    </alternativeName>
</protein>
<proteinExistence type="evidence at transcript level"/>
<dbReference type="EMBL" id="AB473859">
    <property type="protein sequence ID" value="BAH10570.1"/>
    <property type="molecule type" value="mRNA"/>
</dbReference>
<dbReference type="EMBL" id="AL021635">
    <property type="protein sequence ID" value="CAA16555.1"/>
    <property type="molecule type" value="Genomic_DNA"/>
</dbReference>
<dbReference type="EMBL" id="AL161557">
    <property type="protein sequence ID" value="CAB79225.1"/>
    <property type="molecule type" value="Genomic_DNA"/>
</dbReference>
<dbReference type="EMBL" id="CP002687">
    <property type="protein sequence ID" value="AEE84641.1"/>
    <property type="molecule type" value="Genomic_DNA"/>
</dbReference>
<dbReference type="EMBL" id="DQ056654">
    <property type="protein sequence ID" value="AAY78801.1"/>
    <property type="molecule type" value="mRNA"/>
</dbReference>
<dbReference type="PIR" id="T04565">
    <property type="entry name" value="T04565"/>
</dbReference>
<dbReference type="RefSeq" id="NP_194001.1">
    <property type="nucleotide sequence ID" value="NM_118396.4"/>
</dbReference>
<dbReference type="SMR" id="O49651"/>
<dbReference type="BioGRID" id="13655">
    <property type="interactions" value="5"/>
</dbReference>
<dbReference type="IntAct" id="O49651">
    <property type="interactions" value="5"/>
</dbReference>
<dbReference type="STRING" id="3702.O49651"/>
<dbReference type="PaxDb" id="3702-AT4G22700.1"/>
<dbReference type="ProteomicsDB" id="250737"/>
<dbReference type="EnsemblPlants" id="AT4G22700.1">
    <property type="protein sequence ID" value="AT4G22700.1"/>
    <property type="gene ID" value="AT4G22700"/>
</dbReference>
<dbReference type="GeneID" id="828366"/>
<dbReference type="Gramene" id="AT4G22700.1">
    <property type="protein sequence ID" value="AT4G22700.1"/>
    <property type="gene ID" value="AT4G22700"/>
</dbReference>
<dbReference type="KEGG" id="ath:AT4G22700"/>
<dbReference type="Araport" id="AT4G22700"/>
<dbReference type="TAIR" id="AT4G22700">
    <property type="gene designation" value="LBD32"/>
</dbReference>
<dbReference type="HOGENOM" id="CLU_122110_0_0_1"/>
<dbReference type="InParanoid" id="O49651"/>
<dbReference type="OMA" id="MNFAICA"/>
<dbReference type="PhylomeDB" id="O49651"/>
<dbReference type="PRO" id="PR:O49651"/>
<dbReference type="Proteomes" id="UP000006548">
    <property type="component" value="Chromosome 4"/>
</dbReference>
<dbReference type="ExpressionAtlas" id="O49651">
    <property type="expression patterns" value="baseline and differential"/>
</dbReference>
<dbReference type="InterPro" id="IPR004883">
    <property type="entry name" value="LOB"/>
</dbReference>
<dbReference type="PANTHER" id="PTHR31301:SF68">
    <property type="entry name" value="LOB DOMAIN-CONTAINING PROTEIN 32-RELATED"/>
    <property type="match status" value="1"/>
</dbReference>
<dbReference type="PANTHER" id="PTHR31301">
    <property type="entry name" value="LOB DOMAIN-CONTAINING PROTEIN 4-RELATED"/>
    <property type="match status" value="1"/>
</dbReference>
<dbReference type="Pfam" id="PF03195">
    <property type="entry name" value="LOB"/>
    <property type="match status" value="1"/>
</dbReference>
<dbReference type="PROSITE" id="PS50891">
    <property type="entry name" value="LOB"/>
    <property type="match status" value="1"/>
</dbReference>
<keyword id="KW-1185">Reference proteome</keyword>
<sequence length="192" mass="21286">MASNRCAVCKILNETCAPMCIYAPHFPSNDASFKVIIQIFGAVNVCNILDNLEFPEQREIAANCLRYAAEARIRNPISGCHDMILQYKNILNNVEQDIESAVNELGTYVGHDQVPKFYDLPMPDDFLMTPVSLDSFIAKIKSLNEVQKNQLMQLPTAADNAPMIMNSIFGKMEDKNLKDGHRADGASTSAGK</sequence>
<organism>
    <name type="scientific">Arabidopsis thaliana</name>
    <name type="common">Mouse-ear cress</name>
    <dbReference type="NCBI Taxonomy" id="3702"/>
    <lineage>
        <taxon>Eukaryota</taxon>
        <taxon>Viridiplantae</taxon>
        <taxon>Streptophyta</taxon>
        <taxon>Embryophyta</taxon>
        <taxon>Tracheophyta</taxon>
        <taxon>Spermatophyta</taxon>
        <taxon>Magnoliopsida</taxon>
        <taxon>eudicotyledons</taxon>
        <taxon>Gunneridae</taxon>
        <taxon>Pentapetalae</taxon>
        <taxon>rosids</taxon>
        <taxon>malvids</taxon>
        <taxon>Brassicales</taxon>
        <taxon>Brassicaceae</taxon>
        <taxon>Camelineae</taxon>
        <taxon>Arabidopsis</taxon>
    </lineage>
</organism>
<name>LBD32_ARATH</name>